<organism evidence="6">
    <name type="scientific">Anopheles gambiae</name>
    <name type="common">African malaria mosquito</name>
    <dbReference type="NCBI Taxonomy" id="7165"/>
    <lineage>
        <taxon>Eukaryota</taxon>
        <taxon>Metazoa</taxon>
        <taxon>Ecdysozoa</taxon>
        <taxon>Arthropoda</taxon>
        <taxon>Hexapoda</taxon>
        <taxon>Insecta</taxon>
        <taxon>Pterygota</taxon>
        <taxon>Neoptera</taxon>
        <taxon>Endopterygota</taxon>
        <taxon>Diptera</taxon>
        <taxon>Nematocera</taxon>
        <taxon>Culicoidea</taxon>
        <taxon>Culicidae</taxon>
        <taxon>Anophelinae</taxon>
        <taxon>Anopheles</taxon>
    </lineage>
</organism>
<proteinExistence type="evidence at transcript level"/>
<keyword id="KW-1003">Cell membrane</keyword>
<keyword id="KW-0325">Glycoprotein</keyword>
<keyword id="KW-0472">Membrane</keyword>
<keyword id="KW-0552">Olfaction</keyword>
<keyword id="KW-0675">Receptor</keyword>
<keyword id="KW-1185">Reference proteome</keyword>
<keyword id="KW-0716">Sensory transduction</keyword>
<keyword id="KW-0807">Transducer</keyword>
<keyword id="KW-0812">Transmembrane</keyword>
<keyword id="KW-1133">Transmembrane helix</keyword>
<name>OR2_ANOGA</name>
<protein>
    <recommendedName>
        <fullName>Odorant receptor Or2</fullName>
    </recommendedName>
    <alternativeName>
        <fullName>AgOr2</fullName>
    </alternativeName>
</protein>
<dbReference type="EMBL" id="AF364131">
    <property type="protein sequence ID" value="AAL35507.1"/>
    <property type="molecule type" value="Genomic_DNA"/>
</dbReference>
<dbReference type="EMBL" id="FJ154789">
    <property type="protein sequence ID" value="ACH95386.1"/>
    <property type="molecule type" value="mRNA"/>
</dbReference>
<dbReference type="EMBL" id="AAAB01008839">
    <property type="protein sequence ID" value="EAA05926.1"/>
    <property type="molecule type" value="Genomic_DNA"/>
</dbReference>
<dbReference type="RefSeq" id="XP_310173.1">
    <property type="nucleotide sequence ID" value="XM_310173.1"/>
</dbReference>
<dbReference type="SMR" id="Q8WTE6"/>
<dbReference type="FunCoup" id="Q8WTE6">
    <property type="interactions" value="39"/>
</dbReference>
<dbReference type="STRING" id="7165.Q8WTE6"/>
<dbReference type="TCDB" id="1.A.69.1.2">
    <property type="family name" value="the heteromeric odorant receptor channel (horc) family"/>
</dbReference>
<dbReference type="GlyCosmos" id="Q8WTE6">
    <property type="glycosylation" value="1 site, No reported glycans"/>
</dbReference>
<dbReference type="PaxDb" id="7165-AGAP009519-PA"/>
<dbReference type="EnsemblMetazoa" id="AGAP009519-RA">
    <property type="protein sequence ID" value="AGAP009519-PA"/>
    <property type="gene ID" value="AGAP009519"/>
</dbReference>
<dbReference type="GeneID" id="1271390"/>
<dbReference type="KEGG" id="aga:1271390"/>
<dbReference type="VEuPathDB" id="VectorBase:AGAMI1_003033"/>
<dbReference type="VEuPathDB" id="VectorBase:AGAP009519"/>
<dbReference type="eggNOG" id="ENOG502STCD">
    <property type="taxonomic scope" value="Eukaryota"/>
</dbReference>
<dbReference type="InParanoid" id="Q8WTE6"/>
<dbReference type="OMA" id="MIMIGSY"/>
<dbReference type="PhylomeDB" id="Q8WTE6"/>
<dbReference type="Proteomes" id="UP000007062">
    <property type="component" value="Chromosome 3R"/>
</dbReference>
<dbReference type="GO" id="GO:0016020">
    <property type="term" value="C:membrane"/>
    <property type="evidence" value="ECO:0000314"/>
    <property type="project" value="UniProtKB"/>
</dbReference>
<dbReference type="GO" id="GO:0005886">
    <property type="term" value="C:plasma membrane"/>
    <property type="evidence" value="ECO:0000318"/>
    <property type="project" value="GO_Central"/>
</dbReference>
<dbReference type="GO" id="GO:0005549">
    <property type="term" value="F:odorant binding"/>
    <property type="evidence" value="ECO:0000314"/>
    <property type="project" value="UniProtKB"/>
</dbReference>
<dbReference type="GO" id="GO:0004984">
    <property type="term" value="F:olfactory receptor activity"/>
    <property type="evidence" value="ECO:0000314"/>
    <property type="project" value="UniProtKB"/>
</dbReference>
<dbReference type="GO" id="GO:0050911">
    <property type="term" value="P:detection of chemical stimulus involved in sensory perception of smell"/>
    <property type="evidence" value="ECO:0000318"/>
    <property type="project" value="GO_Central"/>
</dbReference>
<dbReference type="GO" id="GO:0042048">
    <property type="term" value="P:olfactory behavior"/>
    <property type="evidence" value="ECO:0000314"/>
    <property type="project" value="UniProtKB"/>
</dbReference>
<dbReference type="GO" id="GO:0007608">
    <property type="term" value="P:sensory perception of smell"/>
    <property type="evidence" value="ECO:0000303"/>
    <property type="project" value="UniProtKB"/>
</dbReference>
<dbReference type="GO" id="GO:0007165">
    <property type="term" value="P:signal transduction"/>
    <property type="evidence" value="ECO:0007669"/>
    <property type="project" value="UniProtKB-KW"/>
</dbReference>
<dbReference type="InterPro" id="IPR004117">
    <property type="entry name" value="7tm6_olfct_rcpt"/>
</dbReference>
<dbReference type="PANTHER" id="PTHR21137">
    <property type="entry name" value="ODORANT RECEPTOR"/>
    <property type="match status" value="1"/>
</dbReference>
<dbReference type="PANTHER" id="PTHR21137:SF3">
    <property type="entry name" value="ODORANT RECEPTOR 30A-RELATED"/>
    <property type="match status" value="1"/>
</dbReference>
<dbReference type="Pfam" id="PF02949">
    <property type="entry name" value="7tm_6"/>
    <property type="match status" value="1"/>
</dbReference>
<gene>
    <name type="primary">OR2</name>
    <name type="ORF">AGAP009519</name>
</gene>
<sequence length="378" mass="43502">MLIEECPIIGVNVRVWLFWSYLRRPRLSRFLVGCIPVAVLNVFQFLKLYSSWGDMSELIINGYFTVLYFNLVLRTSFLVINRRKFETFFEGVAAEYALLEKNDDIRPVLERYTRRGRMLSISNLWLGAFISACFVTYPLFVPGRGLPYGVTIPGVDVLATPTYQVVFVLQVYLTFPACCMYIPFTSFYATCTLFALVQIAALKQRLGRLGRHSGTMASTGHSAGTLFAELKECLKYHKQIIQYVHDLNSLVTHLCLLEFLSFGMMLCALLFLLSISNQLAQMIMIGSYIFMILSQMFAFYWHANEVLEQSLGIGDAIYNGAWPDFEEPIRKRLILIIARAQRPMVIKVGNVYPMTLEMFQKLLNVSYSYFTLLRRVYN</sequence>
<comment type="function">
    <text evidence="2 4">Odorant receptor which plays a critical role in the anthropophilic host-seeking behavior; establishes the host preference to transmit malaria.</text>
</comment>
<comment type="subcellular location">
    <subcellularLocation>
        <location evidence="5">Cell membrane</location>
        <topology evidence="5">Multi-pass membrane protein</topology>
    </subcellularLocation>
</comment>
<comment type="tissue specificity">
    <text evidence="2 3">Expressed in male and female antennae and maxillary palps.</text>
</comment>
<comment type="induction">
    <text evidence="4">Strong response to the odorant 2-methylphenol when expressed in odorant receptor deficient Drosophila.</text>
</comment>
<comment type="similarity">
    <text evidence="5">Belongs to the insect chemoreceptor superfamily. Heteromeric odorant receptor channel (TC 1.A.69) family. Or30a subfamily.</text>
</comment>
<reference evidence="5" key="1">
    <citation type="journal article" date="2001" name="Proc. Natl. Acad. Sci. U.S.A.">
        <title>Candidate odorant receptors from the malaria vector mosquito Anopheles gambiae and evidence of down-regulation in response to blood feeding.</title>
        <authorList>
            <person name="Fox A.N."/>
            <person name="Pitts R.J."/>
            <person name="Robertson H.M."/>
            <person name="Carlson J.R."/>
            <person name="Zwiebel L.J."/>
        </authorList>
    </citation>
    <scope>NUCLEOTIDE SEQUENCE [GENOMIC DNA]</scope>
    <scope>FUNCTION</scope>
    <scope>TISSUE SPECIFICITY</scope>
    <source>
        <strain evidence="2">G3</strain>
    </source>
</reference>
<reference evidence="7" key="2">
    <citation type="submission" date="2008-08" db="EMBL/GenBank/DDBJ databases">
        <title>Anopheles gambiae (Suakoko strain) odorant receptor 2 gene (AgOr2).</title>
        <authorList>
            <person name="Bohbot J.D."/>
            <person name="Zwiebel L.J."/>
            <person name="Wang G."/>
        </authorList>
    </citation>
    <scope>NUCLEOTIDE SEQUENCE [MRNA]</scope>
    <source>
        <strain>Suakoko</strain>
    </source>
</reference>
<reference key="3">
    <citation type="journal article" date="2002" name="Science">
        <title>The genome sequence of the malaria mosquito Anopheles gambiae.</title>
        <authorList>
            <person name="Holt R.A."/>
            <person name="Subramanian G.M."/>
            <person name="Halpern A."/>
            <person name="Sutton G.G."/>
            <person name="Charlab R."/>
            <person name="Nusskern D.R."/>
            <person name="Wincker P."/>
            <person name="Clark A.G."/>
            <person name="Ribeiro J.M.C."/>
            <person name="Wides R."/>
            <person name="Salzberg S.L."/>
            <person name="Loftus B.J."/>
            <person name="Yandell M.D."/>
            <person name="Majoros W.H."/>
            <person name="Rusch D.B."/>
            <person name="Lai Z."/>
            <person name="Kraft C.L."/>
            <person name="Abril J.F."/>
            <person name="Anthouard V."/>
            <person name="Arensburger P."/>
            <person name="Atkinson P.W."/>
            <person name="Baden H."/>
            <person name="de Berardinis V."/>
            <person name="Baldwin D."/>
            <person name="Benes V."/>
            <person name="Biedler J."/>
            <person name="Blass C."/>
            <person name="Bolanos R."/>
            <person name="Boscus D."/>
            <person name="Barnstead M."/>
            <person name="Cai S."/>
            <person name="Center A."/>
            <person name="Chaturverdi K."/>
            <person name="Christophides G.K."/>
            <person name="Chrystal M.A.M."/>
            <person name="Clamp M."/>
            <person name="Cravchik A."/>
            <person name="Curwen V."/>
            <person name="Dana A."/>
            <person name="Delcher A."/>
            <person name="Dew I."/>
            <person name="Evans C.A."/>
            <person name="Flanigan M."/>
            <person name="Grundschober-Freimoser A."/>
            <person name="Friedli L."/>
            <person name="Gu Z."/>
            <person name="Guan P."/>
            <person name="Guigo R."/>
            <person name="Hillenmeyer M.E."/>
            <person name="Hladun S.L."/>
            <person name="Hogan J.R."/>
            <person name="Hong Y.S."/>
            <person name="Hoover J."/>
            <person name="Jaillon O."/>
            <person name="Ke Z."/>
            <person name="Kodira C.D."/>
            <person name="Kokoza E."/>
            <person name="Koutsos A."/>
            <person name="Letunic I."/>
            <person name="Levitsky A.A."/>
            <person name="Liang Y."/>
            <person name="Lin J.-J."/>
            <person name="Lobo N.F."/>
            <person name="Lopez J.R."/>
            <person name="Malek J.A."/>
            <person name="McIntosh T.C."/>
            <person name="Meister S."/>
            <person name="Miller J.R."/>
            <person name="Mobarry C."/>
            <person name="Mongin E."/>
            <person name="Murphy S.D."/>
            <person name="O'Brochta D.A."/>
            <person name="Pfannkoch C."/>
            <person name="Qi R."/>
            <person name="Regier M.A."/>
            <person name="Remington K."/>
            <person name="Shao H."/>
            <person name="Sharakhova M.V."/>
            <person name="Sitter C.D."/>
            <person name="Shetty J."/>
            <person name="Smith T.J."/>
            <person name="Strong R."/>
            <person name="Sun J."/>
            <person name="Thomasova D."/>
            <person name="Ton L.Q."/>
            <person name="Topalis P."/>
            <person name="Tu Z.J."/>
            <person name="Unger M.F."/>
            <person name="Walenz B."/>
            <person name="Wang A.H."/>
            <person name="Wang J."/>
            <person name="Wang M."/>
            <person name="Wang X."/>
            <person name="Woodford K.J."/>
            <person name="Wortman J.R."/>
            <person name="Wu M."/>
            <person name="Yao A."/>
            <person name="Zdobnov E.M."/>
            <person name="Zhang H."/>
            <person name="Zhao Q."/>
            <person name="Zhao S."/>
            <person name="Zhu S.C."/>
            <person name="Zhimulev I."/>
            <person name="Coluzzi M."/>
            <person name="della Torre A."/>
            <person name="Roth C.W."/>
            <person name="Louis C."/>
            <person name="Kalush F."/>
            <person name="Mural R.J."/>
            <person name="Myers E.W."/>
            <person name="Adams M.D."/>
            <person name="Smith H.O."/>
            <person name="Broder S."/>
            <person name="Gardner M.J."/>
            <person name="Fraser C.M."/>
            <person name="Birney E."/>
            <person name="Bork P."/>
            <person name="Brey P.T."/>
            <person name="Venter J.C."/>
            <person name="Weissenbach J."/>
            <person name="Kafatos F.C."/>
            <person name="Collins F.H."/>
            <person name="Hoffman S.L."/>
        </authorList>
    </citation>
    <scope>NUCLEOTIDE SEQUENCE [LARGE SCALE GENOMIC DNA]</scope>
    <source>
        <strain>PEST</strain>
    </source>
</reference>
<reference evidence="5" key="4">
    <citation type="journal article" date="2002" name="Science">
        <title>G protein-coupled receptors in Anopheles gambiae.</title>
        <authorList>
            <person name="Hill C.A."/>
            <person name="Fox A.N."/>
            <person name="Pitts R.J."/>
            <person name="Kent L.B."/>
            <person name="Tan P.L."/>
            <person name="Chrystal M.A."/>
            <person name="Cravchik A."/>
            <person name="Collins F.H."/>
            <person name="Robertson H.M."/>
            <person name="Zwiebel L.J."/>
        </authorList>
    </citation>
    <scope>IDENTIFICATION</scope>
    <scope>TISSUE SPECIFICITY</scope>
</reference>
<reference evidence="5" key="5">
    <citation type="journal article" date="2004" name="Nature">
        <title>Olfaction: mosquito receptor for human-sweat odorant.</title>
        <authorList>
            <person name="Hallem E.A."/>
            <person name="Fox A.N."/>
            <person name="Zwiebel L.J."/>
            <person name="Carlson J.R."/>
        </authorList>
    </citation>
    <scope>FUNCTION</scope>
    <scope>INDUCTION</scope>
</reference>
<accession>Q8WTE6</accession>
<accession>B5U0U8</accession>
<accession>Q7QG59</accession>
<feature type="chain" id="PRO_0000174287" description="Odorant receptor Or2">
    <location>
        <begin position="1"/>
        <end position="378"/>
    </location>
</feature>
<feature type="topological domain" description="Cytoplasmic" evidence="1">
    <location>
        <position position="1"/>
    </location>
</feature>
<feature type="transmembrane region" description="Helical; Name=1" evidence="1">
    <location>
        <begin position="2"/>
        <end position="22"/>
    </location>
</feature>
<feature type="topological domain" description="Extracellular" evidence="1">
    <location>
        <begin position="23"/>
        <end position="29"/>
    </location>
</feature>
<feature type="transmembrane region" description="Helical; Name=2" evidence="1">
    <location>
        <begin position="30"/>
        <end position="50"/>
    </location>
</feature>
<feature type="topological domain" description="Cytoplasmic" evidence="1">
    <location>
        <begin position="51"/>
        <end position="59"/>
    </location>
</feature>
<feature type="transmembrane region" description="Helical; Name=3" evidence="1">
    <location>
        <begin position="60"/>
        <end position="80"/>
    </location>
</feature>
<feature type="topological domain" description="Extracellular" evidence="1">
    <location>
        <begin position="81"/>
        <end position="120"/>
    </location>
</feature>
<feature type="transmembrane region" description="Helical; Name=4" evidence="1">
    <location>
        <begin position="121"/>
        <end position="141"/>
    </location>
</feature>
<feature type="topological domain" description="Cytoplasmic" evidence="1">
    <location>
        <begin position="142"/>
        <end position="164"/>
    </location>
</feature>
<feature type="transmembrane region" description="Helical; Name=5" evidence="1">
    <location>
        <begin position="165"/>
        <end position="185"/>
    </location>
</feature>
<feature type="topological domain" description="Extracellular" evidence="1">
    <location>
        <begin position="186"/>
        <end position="254"/>
    </location>
</feature>
<feature type="transmembrane region" description="Helical; Name=6" evidence="1">
    <location>
        <begin position="255"/>
        <end position="275"/>
    </location>
</feature>
<feature type="topological domain" description="Cytoplasmic" evidence="1">
    <location>
        <begin position="276"/>
        <end position="278"/>
    </location>
</feature>
<feature type="transmembrane region" description="Helical; Name=7" evidence="1">
    <location>
        <begin position="279"/>
        <end position="299"/>
    </location>
</feature>
<feature type="topological domain" description="Extracellular" evidence="1">
    <location>
        <begin position="300"/>
        <end position="378"/>
    </location>
</feature>
<feature type="glycosylation site" description="N-linked (GlcNAc...) asparagine" evidence="1">
    <location>
        <position position="364"/>
    </location>
</feature>
<evidence type="ECO:0000255" key="1"/>
<evidence type="ECO:0000269" key="2">
    <source>
    </source>
</evidence>
<evidence type="ECO:0000269" key="3">
    <source>
    </source>
</evidence>
<evidence type="ECO:0000269" key="4">
    <source>
    </source>
</evidence>
<evidence type="ECO:0000305" key="5"/>
<evidence type="ECO:0000312" key="6">
    <source>
        <dbReference type="EMBL" id="AAL35507.1"/>
    </source>
</evidence>
<evidence type="ECO:0000312" key="7">
    <source>
        <dbReference type="EMBL" id="EAA05926.1"/>
    </source>
</evidence>